<protein>
    <recommendedName>
        <fullName>U4-theraphotoxin-Hhn1a</fullName>
        <shortName>U4-TRTX-Hhn1a</shortName>
    </recommendedName>
    <alternativeName>
        <fullName>Hainantoxin-II.17</fullName>
        <shortName>HNTX-II.17</shortName>
    </alternativeName>
    <alternativeName>
        <fullName>Peptide F8-20.15</fullName>
    </alternativeName>
</protein>
<accession>D2Y210</accession>
<keyword id="KW-0903">Direct protein sequencing</keyword>
<keyword id="KW-1015">Disulfide bond</keyword>
<keyword id="KW-0528">Neurotoxin</keyword>
<keyword id="KW-0629">Postsynaptic neurotoxin</keyword>
<keyword id="KW-0964">Secreted</keyword>
<keyword id="KW-0732">Signal</keyword>
<keyword id="KW-0800">Toxin</keyword>
<dbReference type="EMBL" id="GU292887">
    <property type="protein sequence ID" value="ADB56703.1"/>
    <property type="molecule type" value="mRNA"/>
</dbReference>
<dbReference type="EMBL" id="GU293067">
    <property type="protein sequence ID" value="ADB56883.1"/>
    <property type="molecule type" value="Genomic_DNA"/>
</dbReference>
<dbReference type="SMR" id="D2Y210"/>
<dbReference type="ArachnoServer" id="AS001783">
    <property type="toxin name" value="U4-theraphotoxin-Hhn1a"/>
</dbReference>
<dbReference type="GO" id="GO:0005576">
    <property type="term" value="C:extracellular region"/>
    <property type="evidence" value="ECO:0007669"/>
    <property type="project" value="UniProtKB-SubCell"/>
</dbReference>
<dbReference type="GO" id="GO:0035792">
    <property type="term" value="C:host cell postsynaptic membrane"/>
    <property type="evidence" value="ECO:0007669"/>
    <property type="project" value="UniProtKB-KW"/>
</dbReference>
<dbReference type="GO" id="GO:0090729">
    <property type="term" value="F:toxin activity"/>
    <property type="evidence" value="ECO:0007669"/>
    <property type="project" value="UniProtKB-KW"/>
</dbReference>
<dbReference type="InterPro" id="IPR012625">
    <property type="entry name" value="Hwtx-2-like"/>
</dbReference>
<dbReference type="Pfam" id="PF08089">
    <property type="entry name" value="Toxin_20"/>
    <property type="match status" value="1"/>
</dbReference>
<dbReference type="SUPFAM" id="SSF57059">
    <property type="entry name" value="omega toxin-like"/>
    <property type="match status" value="1"/>
</dbReference>
<dbReference type="PROSITE" id="PS60022">
    <property type="entry name" value="HWTX_2"/>
    <property type="match status" value="1"/>
</dbReference>
<comment type="function">
    <text evidence="4">Neurotoxin active on both insects and mammals.</text>
</comment>
<comment type="subunit">
    <text>Monomer.</text>
</comment>
<comment type="subcellular location">
    <subcellularLocation>
        <location>Secreted</location>
    </subcellularLocation>
</comment>
<comment type="tissue specificity">
    <text>Expressed by the venom gland.</text>
</comment>
<comment type="mass spectrometry"/>
<comment type="toxic dose">
    <text evidence="4">LD(50) is 1.41 mg/kg by intracerebroventricular injection into mice.</text>
</comment>
<comment type="toxic dose">
    <text evidence="4">PD(50) is 16 mg/kg in cockroaches.</text>
</comment>
<comment type="similarity">
    <text evidence="5">Belongs to the neurotoxin 12 (Hwtx-2) family. 02 (Hwtx-2) subfamily.</text>
</comment>
<evidence type="ECO:0000250" key="1"/>
<evidence type="ECO:0000255" key="2"/>
<evidence type="ECO:0000269" key="3">
    <source>
    </source>
</evidence>
<evidence type="ECO:0000269" key="4">
    <source>
    </source>
</evidence>
<evidence type="ECO:0000305" key="5"/>
<organism>
    <name type="scientific">Cyriopagopus hainanus</name>
    <name type="common">Chinese bird spider</name>
    <name type="synonym">Haplopelma hainanum</name>
    <dbReference type="NCBI Taxonomy" id="209901"/>
    <lineage>
        <taxon>Eukaryota</taxon>
        <taxon>Metazoa</taxon>
        <taxon>Ecdysozoa</taxon>
        <taxon>Arthropoda</taxon>
        <taxon>Chelicerata</taxon>
        <taxon>Arachnida</taxon>
        <taxon>Araneae</taxon>
        <taxon>Mygalomorphae</taxon>
        <taxon>Theraphosidae</taxon>
        <taxon>Haplopelma</taxon>
    </lineage>
</organism>
<name>H2A17_CYRHA</name>
<feature type="signal peptide" evidence="2">
    <location>
        <begin position="1"/>
        <end position="22"/>
    </location>
</feature>
<feature type="propeptide" id="PRO_0000400749" evidence="3 4">
    <location>
        <begin position="23"/>
        <end position="48"/>
    </location>
</feature>
<feature type="peptide" id="PRO_0000400750" description="U4-theraphotoxin-Hhn1a">
    <location>
        <begin position="49"/>
        <end position="85"/>
    </location>
</feature>
<feature type="disulfide bond" evidence="1">
    <location>
        <begin position="52"/>
        <end position="66"/>
    </location>
</feature>
<feature type="disulfide bond" evidence="1">
    <location>
        <begin position="56"/>
        <end position="77"/>
    </location>
</feature>
<feature type="disulfide bond" evidence="1">
    <location>
        <begin position="71"/>
        <end position="82"/>
    </location>
</feature>
<reference key="1">
    <citation type="journal article" date="2010" name="J. Proteome Res.">
        <title>Molecular diversification of peptide toxins from the tarantula Haplopelma hainanum (Ornithoctonus hainana) venom based on transcriptomic, peptidomic, and genomic analyses.</title>
        <authorList>
            <person name="Tang X."/>
            <person name="Zhang Y."/>
            <person name="Hu W."/>
            <person name="Xu D."/>
            <person name="Tao H."/>
            <person name="Yang X."/>
            <person name="Li Y."/>
            <person name="Jiang L."/>
            <person name="Liang S."/>
        </authorList>
    </citation>
    <scope>NUCLEOTIDE SEQUENCE [LARGE SCALE GENOMIC DNA / MRNA]</scope>
    <scope>PROTEIN SEQUENCE OF 49-85</scope>
    <scope>IDENTIFICATION BY MASS SPECTROMETRY</scope>
    <source>
        <tissue>Venom</tissue>
        <tissue>Venom gland</tissue>
    </source>
</reference>
<reference key="2">
    <citation type="journal article" date="2010" name="Dong Wu Xue Yan Jiu">
        <title>Isolation and characterization of Hainantoxin-II, a new neurotoxic peptide from the Chinese bird spider (Haplopelma hainanum).</title>
        <authorList>
            <person name="Pan J.Y."/>
            <person name="Yu Z.Q."/>
        </authorList>
    </citation>
    <scope>PROTEIN SEQUENCE OF 49-85</scope>
    <scope>FUNCTION</scope>
    <scope>MASS SPECTROMETRY</scope>
    <scope>TOXIC DOSE</scope>
    <source>
        <tissue>Venom</tissue>
    </source>
</reference>
<proteinExistence type="evidence at protein level"/>
<sequence>MKVTLIAILTCAAALVLHTTAAEELEAESQLMEVGMPDTELAAVDEERLFECSVSCEIEKEGNKDCKKKKCKGGWKCKFNMCVKV</sequence>